<evidence type="ECO:0000250" key="1"/>
<evidence type="ECO:0000269" key="2">
    <source>
    </source>
</evidence>
<evidence type="ECO:0000269" key="3">
    <source>
    </source>
</evidence>
<evidence type="ECO:0000269" key="4">
    <source>
    </source>
</evidence>
<evidence type="ECO:0000269" key="5">
    <source>
    </source>
</evidence>
<evidence type="ECO:0000269" key="6">
    <source>
    </source>
</evidence>
<evidence type="ECO:0000303" key="7">
    <source>
    </source>
</evidence>
<evidence type="ECO:0000305" key="8"/>
<keyword id="KW-0025">Alternative splicing</keyword>
<keyword id="KW-0266">Ethylene biosynthesis</keyword>
<keyword id="KW-0292">Fruit ripening</keyword>
<keyword id="KW-0456">Lyase</keyword>
<keyword id="KW-0597">Phosphoprotein</keyword>
<keyword id="KW-0663">Pyridoxal phosphate</keyword>
<keyword id="KW-1185">Reference proteome</keyword>
<keyword id="KW-0949">S-adenosyl-L-methionine</keyword>
<comment type="function">
    <text>1-aminocyclopropane-1-carboxylate synthase (ACS) enzymes catalyze the conversion of S-adenosyl-L-methionine (SAM) into 1-aminocyclopropane-1-carboxylate (ACC), a direct precursor of ethylene.</text>
</comment>
<comment type="catalytic activity">
    <reaction evidence="2">
        <text>S-adenosyl-L-methionine = 1-aminocyclopropane-1-carboxylate + S-methyl-5'-thioadenosine + H(+)</text>
        <dbReference type="Rhea" id="RHEA:21744"/>
        <dbReference type="ChEBI" id="CHEBI:15378"/>
        <dbReference type="ChEBI" id="CHEBI:17509"/>
        <dbReference type="ChEBI" id="CHEBI:58360"/>
        <dbReference type="ChEBI" id="CHEBI:59789"/>
        <dbReference type="EC" id="4.4.1.14"/>
    </reaction>
</comment>
<comment type="cofactor">
    <cofactor>
        <name>pyridoxal 5'-phosphate</name>
        <dbReference type="ChEBI" id="CHEBI:597326"/>
    </cofactor>
</comment>
<comment type="biophysicochemical properties">
    <kinetics>
        <KM>45 uM for AdoMet</KM>
        <Vmax>32.0 uM/h/mg enzyme</Vmax>
    </kinetics>
    <phDependence>
        <text>Optimum pH is 8.2.</text>
    </phDependence>
</comment>
<comment type="pathway">
    <text>Alkene biosynthesis; ethylene biosynthesis via S-adenosyl-L-methionine; ethylene from S-adenosyl-L-methionine: step 1/2.</text>
</comment>
<comment type="subunit">
    <text evidence="1 5">Homodimer and heterodimer. In vivo, the relevance of heterodimerization with other ACS enzymes is however unsure (By similarity). Interacts with GRF3.</text>
</comment>
<comment type="alternative products">
    <event type="alternative splicing"/>
    <isoform>
        <id>Q06402-1</id>
        <name>1</name>
        <sequence type="displayed"/>
    </isoform>
    <isoform>
        <id>Q06402-2</id>
        <name>2</name>
        <sequence type="described" ref="VSP_009111"/>
    </isoform>
</comment>
<comment type="tissue specificity">
    <text evidence="2">High in developing leaves and in flowers. Expressed in roots and siliques.</text>
</comment>
<comment type="induction">
    <text evidence="2">By ethylene. By indole-3-acetic acid (IAA) and cycloheximide (CHX).</text>
</comment>
<comment type="PTM">
    <text evidence="4">Phosphorylated on serine residue by MAP kinase (MPK6).</text>
</comment>
<comment type="PTM">
    <text>May be processed at its C-terminus.</text>
</comment>
<comment type="miscellaneous">
    <text>The stability of ACS proteins, and the regulation of such stability, play a central role in ethylene biosynthesis.</text>
</comment>
<comment type="similarity">
    <text evidence="8">Belongs to the class-I pyridoxal-phosphate-dependent aminotransferase family.</text>
</comment>
<accession>Q06402</accession>
<accession>Q941E7</accession>
<proteinExistence type="evidence at protein level"/>
<organism>
    <name type="scientific">Arabidopsis thaliana</name>
    <name type="common">Mouse-ear cress</name>
    <dbReference type="NCBI Taxonomy" id="3702"/>
    <lineage>
        <taxon>Eukaryota</taxon>
        <taxon>Viridiplantae</taxon>
        <taxon>Streptophyta</taxon>
        <taxon>Embryophyta</taxon>
        <taxon>Tracheophyta</taxon>
        <taxon>Spermatophyta</taxon>
        <taxon>Magnoliopsida</taxon>
        <taxon>eudicotyledons</taxon>
        <taxon>Gunneridae</taxon>
        <taxon>Pentapetalae</taxon>
        <taxon>rosids</taxon>
        <taxon>malvids</taxon>
        <taxon>Brassicales</taxon>
        <taxon>Brassicaceae</taxon>
        <taxon>Camelineae</taxon>
        <taxon>Arabidopsis</taxon>
    </lineage>
</organism>
<dbReference type="EC" id="4.4.1.14"/>
<dbReference type="EMBL" id="Z12614">
    <property type="protein sequence ID" value="CAA78260.1"/>
    <property type="molecule type" value="Genomic_DNA"/>
</dbReference>
<dbReference type="EMBL" id="M95594">
    <property type="protein sequence ID" value="AAA97516.1"/>
    <property type="molecule type" value="Genomic_DNA"/>
</dbReference>
<dbReference type="EMBL" id="M95595">
    <property type="protein sequence ID" value="AAB59298.1"/>
    <property type="molecule type" value="mRNA"/>
</dbReference>
<dbReference type="EMBL" id="Y12776">
    <property type="protein sequence ID" value="CAA73310.1"/>
    <property type="molecule type" value="Genomic_DNA"/>
</dbReference>
<dbReference type="EMBL" id="AC061957">
    <property type="protein sequence ID" value="AAF81308.1"/>
    <property type="molecule type" value="Genomic_DNA"/>
</dbReference>
<dbReference type="EMBL" id="CP002684">
    <property type="protein sequence ID" value="AEE27293.1"/>
    <property type="molecule type" value="Genomic_DNA"/>
</dbReference>
<dbReference type="EMBL" id="CP002684">
    <property type="protein sequence ID" value="AEE27294.1"/>
    <property type="molecule type" value="Genomic_DNA"/>
</dbReference>
<dbReference type="EMBL" id="AF334719">
    <property type="protein sequence ID" value="AAG50097.1"/>
    <property type="molecule type" value="mRNA"/>
</dbReference>
<dbReference type="EMBL" id="AY052207">
    <property type="protein sequence ID" value="AAK97678.1"/>
    <property type="molecule type" value="mRNA"/>
</dbReference>
<dbReference type="EMBL" id="AY143877">
    <property type="protein sequence ID" value="AAN28816.1"/>
    <property type="molecule type" value="mRNA"/>
</dbReference>
<dbReference type="PIR" id="A47199">
    <property type="entry name" value="A47199"/>
</dbReference>
<dbReference type="RefSeq" id="NP_171655.1">
    <molecule id="Q06402-1"/>
    <property type="nucleotide sequence ID" value="NM_100030.4"/>
</dbReference>
<dbReference type="RefSeq" id="NP_849572.1">
    <molecule id="Q06402-2"/>
    <property type="nucleotide sequence ID" value="NM_179241.1"/>
</dbReference>
<dbReference type="SMR" id="Q06402"/>
<dbReference type="BioGRID" id="22324">
    <property type="interactions" value="1"/>
</dbReference>
<dbReference type="FunCoup" id="Q06402">
    <property type="interactions" value="410"/>
</dbReference>
<dbReference type="IntAct" id="Q06402">
    <property type="interactions" value="1"/>
</dbReference>
<dbReference type="STRING" id="3702.Q06402"/>
<dbReference type="iPTMnet" id="Q06402"/>
<dbReference type="PaxDb" id="3702-AT1G01480.1"/>
<dbReference type="ProteomicsDB" id="245135">
    <molecule id="Q06402-1"/>
</dbReference>
<dbReference type="EnsemblPlants" id="AT1G01480.1">
    <molecule id="Q06402-1"/>
    <property type="protein sequence ID" value="AT1G01480.1"/>
    <property type="gene ID" value="AT1G01480"/>
</dbReference>
<dbReference type="EnsemblPlants" id="AT1G01480.2">
    <molecule id="Q06402-2"/>
    <property type="protein sequence ID" value="AT1G01480.2"/>
    <property type="gene ID" value="AT1G01480"/>
</dbReference>
<dbReference type="GeneID" id="837082"/>
<dbReference type="Gramene" id="AT1G01480.1">
    <molecule id="Q06402-1"/>
    <property type="protein sequence ID" value="AT1G01480.1"/>
    <property type="gene ID" value="AT1G01480"/>
</dbReference>
<dbReference type="Gramene" id="AT1G01480.2">
    <molecule id="Q06402-2"/>
    <property type="protein sequence ID" value="AT1G01480.2"/>
    <property type="gene ID" value="AT1G01480"/>
</dbReference>
<dbReference type="KEGG" id="ath:AT1G01480"/>
<dbReference type="Araport" id="AT1G01480"/>
<dbReference type="TAIR" id="AT1G01480">
    <property type="gene designation" value="ACS2"/>
</dbReference>
<dbReference type="eggNOG" id="KOG0256">
    <property type="taxonomic scope" value="Eukaryota"/>
</dbReference>
<dbReference type="InParanoid" id="Q06402"/>
<dbReference type="OMA" id="HFMGKAR"/>
<dbReference type="PhylomeDB" id="Q06402"/>
<dbReference type="BioCyc" id="ARA:AT1G01480-MONOMER"/>
<dbReference type="BioCyc" id="MetaCyc:AT1G01480-MONOMER"/>
<dbReference type="BRENDA" id="4.4.1.14">
    <property type="organism ID" value="399"/>
</dbReference>
<dbReference type="SABIO-RK" id="Q06402"/>
<dbReference type="UniPathway" id="UPA00384">
    <property type="reaction ID" value="UER00562"/>
</dbReference>
<dbReference type="PRO" id="PR:Q06402"/>
<dbReference type="Proteomes" id="UP000006548">
    <property type="component" value="Chromosome 1"/>
</dbReference>
<dbReference type="ExpressionAtlas" id="Q06402">
    <property type="expression patterns" value="baseline and differential"/>
</dbReference>
<dbReference type="GO" id="GO:0016847">
    <property type="term" value="F:1-aminocyclopropane-1-carboxylate synthase activity"/>
    <property type="evidence" value="ECO:0000314"/>
    <property type="project" value="TAIR"/>
</dbReference>
<dbReference type="GO" id="GO:0030170">
    <property type="term" value="F:pyridoxal phosphate binding"/>
    <property type="evidence" value="ECO:0007669"/>
    <property type="project" value="InterPro"/>
</dbReference>
<dbReference type="GO" id="GO:0009693">
    <property type="term" value="P:ethylene biosynthetic process"/>
    <property type="evidence" value="ECO:0000304"/>
    <property type="project" value="TAIR"/>
</dbReference>
<dbReference type="GO" id="GO:0009835">
    <property type="term" value="P:fruit ripening"/>
    <property type="evidence" value="ECO:0007669"/>
    <property type="project" value="UniProtKB-KW"/>
</dbReference>
<dbReference type="CDD" id="cd00609">
    <property type="entry name" value="AAT_like"/>
    <property type="match status" value="1"/>
</dbReference>
<dbReference type="Gene3D" id="3.90.1150.10">
    <property type="entry name" value="Aspartate Aminotransferase, domain 1"/>
    <property type="match status" value="1"/>
</dbReference>
<dbReference type="Gene3D" id="3.40.640.10">
    <property type="entry name" value="Type I PLP-dependent aspartate aminotransferase-like (Major domain)"/>
    <property type="match status" value="1"/>
</dbReference>
<dbReference type="InterPro" id="IPR004839">
    <property type="entry name" value="Aminotransferase_I/II_large"/>
</dbReference>
<dbReference type="InterPro" id="IPR050478">
    <property type="entry name" value="Ethylene_sulfur-biosynth"/>
</dbReference>
<dbReference type="InterPro" id="IPR004838">
    <property type="entry name" value="NHTrfase_class1_PyrdxlP-BS"/>
</dbReference>
<dbReference type="InterPro" id="IPR015424">
    <property type="entry name" value="PyrdxlP-dep_Trfase"/>
</dbReference>
<dbReference type="InterPro" id="IPR015421">
    <property type="entry name" value="PyrdxlP-dep_Trfase_major"/>
</dbReference>
<dbReference type="InterPro" id="IPR015422">
    <property type="entry name" value="PyrdxlP-dep_Trfase_small"/>
</dbReference>
<dbReference type="PANTHER" id="PTHR43795:SF118">
    <property type="entry name" value="1-AMINOCYCLOPROPANE-1-CARBOXYLATE SYNTHASE 2"/>
    <property type="match status" value="1"/>
</dbReference>
<dbReference type="PANTHER" id="PTHR43795">
    <property type="entry name" value="BIFUNCTIONAL ASPARTATE AMINOTRANSFERASE AND GLUTAMATE/ASPARTATE-PREPHENATE AMINOTRANSFERASE-RELATED"/>
    <property type="match status" value="1"/>
</dbReference>
<dbReference type="Pfam" id="PF00155">
    <property type="entry name" value="Aminotran_1_2"/>
    <property type="match status" value="1"/>
</dbReference>
<dbReference type="PRINTS" id="PR00753">
    <property type="entry name" value="ACCSYNTHASE"/>
</dbReference>
<dbReference type="SUPFAM" id="SSF53383">
    <property type="entry name" value="PLP-dependent transferases"/>
    <property type="match status" value="1"/>
</dbReference>
<dbReference type="PROSITE" id="PS00105">
    <property type="entry name" value="AA_TRANSFER_CLASS_1"/>
    <property type="match status" value="1"/>
</dbReference>
<feature type="chain" id="PRO_0000123897" description="1-aminocyclopropane-1-carboxylate synthase 2">
    <location>
        <begin position="1"/>
        <end position="496"/>
    </location>
</feature>
<feature type="binding site" evidence="1">
    <location>
        <position position="55"/>
    </location>
    <ligand>
        <name>substrate</name>
    </ligand>
</feature>
<feature type="binding site" evidence="1">
    <location>
        <position position="93"/>
    </location>
    <ligand>
        <name>substrate</name>
    </ligand>
</feature>
<feature type="modified residue" description="N6-(pyridoxal phosphate)lysine" evidence="1">
    <location>
        <position position="279"/>
    </location>
</feature>
<feature type="modified residue" description="Phosphoserine" evidence="4">
    <location>
        <position position="483"/>
    </location>
</feature>
<feature type="modified residue" description="Phosphoserine" evidence="4">
    <location>
        <position position="488"/>
    </location>
</feature>
<feature type="modified residue" description="Phosphoserine" evidence="4">
    <location>
        <position position="491"/>
    </location>
</feature>
<feature type="splice variant" id="VSP_009111" description="In isoform 2." evidence="7">
    <location>
        <begin position="1"/>
        <end position="106"/>
    </location>
</feature>
<feature type="sequence variant" evidence="3">
    <original>M</original>
    <variation>I</variation>
    <location>
        <position position="136"/>
    </location>
</feature>
<feature type="mutagenesis site" description="Abolishes 1-aminocyclopropane-1-carboxylate synthase function." evidence="6">
    <location>
        <begin position="206"/>
        <end position="208"/>
    </location>
</feature>
<gene>
    <name type="primary">ACS2</name>
    <name type="synonym">ACC1</name>
    <name type="ordered locus">At1g01480</name>
    <name type="ORF">F22L4.4</name>
</gene>
<protein>
    <recommendedName>
        <fullName>1-aminocyclopropane-1-carboxylate synthase 2</fullName>
        <shortName>ACC synthase 2</shortName>
        <ecNumber>4.4.1.14</ecNumber>
    </recommendedName>
    <alternativeName>
        <fullName>S-adenosyl-L-methionine methylthioadenosine-lyase 2</fullName>
    </alternativeName>
</protein>
<reference key="1">
    <citation type="journal article" date="1992" name="Proc. Natl. Acad. Sci. U.S.A.">
        <title>Cloning, genetic mapping, and expression analysis of an Arabidopsis thaliana gene that encodes 1-aminocyclopropane-1-carboxylate synthase.</title>
        <authorList>
            <person name="van der Straeten D."/>
            <person name="Rodrigues-Pousada R.A."/>
            <person name="Villarroel R."/>
            <person name="Hanley S."/>
            <person name="Goodman H.M."/>
            <person name="Van Montagu M."/>
        </authorList>
    </citation>
    <scope>NUCLEOTIDE SEQUENCE [GENOMIC DNA]</scope>
    <scope>ALTERNATIVE SPLICING (ISOFORM 1)</scope>
    <scope>VARIANT ILE-136</scope>
    <source>
        <strain>cv. Columbia</strain>
    </source>
</reference>
<reference key="2">
    <citation type="journal article" date="1992" name="Proc. Natl. Acad. Sci. U.S.A.">
        <title>The 1-aminocyclopropane-1-carboxylate synthase gene family of Arabidopsis thaliana.</title>
        <authorList>
            <person name="Liang X.-W."/>
            <person name="Abel S."/>
            <person name="Keller J.A."/>
            <person name="Shen N.F."/>
            <person name="Theologis A."/>
        </authorList>
    </citation>
    <scope>NUCLEOTIDE SEQUENCE [GENOMIC DNA / MRNA] (ISOFORM 1)</scope>
    <source>
        <strain>cv. Columbia</strain>
    </source>
</reference>
<reference key="3">
    <citation type="journal article" date="1998" name="Gene">
        <title>Sequence analysis of a 40-kb Arabidopsis thaliana genomic region located at the top of chromosome 1.</title>
        <authorList>
            <person name="Terryn N."/>
            <person name="Gielen J."/>
            <person name="De Keyser A."/>
            <person name="Van Den Daele H."/>
            <person name="Ardiles W."/>
            <person name="Neyt P."/>
            <person name="De Clercq R."/>
            <person name="Coppieters J."/>
            <person name="Dehais P."/>
            <person name="Villarroel R."/>
            <person name="Rouze P."/>
            <person name="van Montagu M."/>
        </authorList>
    </citation>
    <scope>NUCLEOTIDE SEQUENCE [GENOMIC DNA]</scope>
    <scope>ALTERNATIVE SPLICING (ISOFORM 1)</scope>
    <source>
        <strain>cv. Columbia</strain>
    </source>
</reference>
<reference key="4">
    <citation type="journal article" date="2000" name="Nature">
        <title>Sequence and analysis of chromosome 1 of the plant Arabidopsis thaliana.</title>
        <authorList>
            <person name="Theologis A."/>
            <person name="Ecker J.R."/>
            <person name="Palm C.J."/>
            <person name="Federspiel N.A."/>
            <person name="Kaul S."/>
            <person name="White O."/>
            <person name="Alonso J."/>
            <person name="Altafi H."/>
            <person name="Araujo R."/>
            <person name="Bowman C.L."/>
            <person name="Brooks S.Y."/>
            <person name="Buehler E."/>
            <person name="Chan A."/>
            <person name="Chao Q."/>
            <person name="Chen H."/>
            <person name="Cheuk R.F."/>
            <person name="Chin C.W."/>
            <person name="Chung M.K."/>
            <person name="Conn L."/>
            <person name="Conway A.B."/>
            <person name="Conway A.R."/>
            <person name="Creasy T.H."/>
            <person name="Dewar K."/>
            <person name="Dunn P."/>
            <person name="Etgu P."/>
            <person name="Feldblyum T.V."/>
            <person name="Feng J.-D."/>
            <person name="Fong B."/>
            <person name="Fujii C.Y."/>
            <person name="Gill J.E."/>
            <person name="Goldsmith A.D."/>
            <person name="Haas B."/>
            <person name="Hansen N.F."/>
            <person name="Hughes B."/>
            <person name="Huizar L."/>
            <person name="Hunter J.L."/>
            <person name="Jenkins J."/>
            <person name="Johnson-Hopson C."/>
            <person name="Khan S."/>
            <person name="Khaykin E."/>
            <person name="Kim C.J."/>
            <person name="Koo H.L."/>
            <person name="Kremenetskaia I."/>
            <person name="Kurtz D.B."/>
            <person name="Kwan A."/>
            <person name="Lam B."/>
            <person name="Langin-Hooper S."/>
            <person name="Lee A."/>
            <person name="Lee J.M."/>
            <person name="Lenz C.A."/>
            <person name="Li J.H."/>
            <person name="Li Y.-P."/>
            <person name="Lin X."/>
            <person name="Liu S.X."/>
            <person name="Liu Z.A."/>
            <person name="Luros J.S."/>
            <person name="Maiti R."/>
            <person name="Marziali A."/>
            <person name="Militscher J."/>
            <person name="Miranda M."/>
            <person name="Nguyen M."/>
            <person name="Nierman W.C."/>
            <person name="Osborne B.I."/>
            <person name="Pai G."/>
            <person name="Peterson J."/>
            <person name="Pham P.K."/>
            <person name="Rizzo M."/>
            <person name="Rooney T."/>
            <person name="Rowley D."/>
            <person name="Sakano H."/>
            <person name="Salzberg S.L."/>
            <person name="Schwartz J.R."/>
            <person name="Shinn P."/>
            <person name="Southwick A.M."/>
            <person name="Sun H."/>
            <person name="Tallon L.J."/>
            <person name="Tambunga G."/>
            <person name="Toriumi M.J."/>
            <person name="Town C.D."/>
            <person name="Utterback T."/>
            <person name="Van Aken S."/>
            <person name="Vaysberg M."/>
            <person name="Vysotskaia V.S."/>
            <person name="Walker M."/>
            <person name="Wu D."/>
            <person name="Yu G."/>
            <person name="Fraser C.M."/>
            <person name="Venter J.C."/>
            <person name="Davis R.W."/>
        </authorList>
    </citation>
    <scope>NUCLEOTIDE SEQUENCE [LARGE SCALE GENOMIC DNA]</scope>
    <source>
        <strain>cv. Columbia</strain>
    </source>
</reference>
<reference key="5">
    <citation type="journal article" date="2017" name="Plant J.">
        <title>Araport11: a complete reannotation of the Arabidopsis thaliana reference genome.</title>
        <authorList>
            <person name="Cheng C.Y."/>
            <person name="Krishnakumar V."/>
            <person name="Chan A.P."/>
            <person name="Thibaud-Nissen F."/>
            <person name="Schobel S."/>
            <person name="Town C.D."/>
        </authorList>
    </citation>
    <scope>GENOME REANNOTATION</scope>
    <source>
        <strain>cv. Columbia</strain>
    </source>
</reference>
<reference key="6">
    <citation type="journal article" date="2003" name="Science">
        <title>Empirical analysis of transcriptional activity in the Arabidopsis genome.</title>
        <authorList>
            <person name="Yamada K."/>
            <person name="Lim J."/>
            <person name="Dale J.M."/>
            <person name="Chen H."/>
            <person name="Shinn P."/>
            <person name="Palm C.J."/>
            <person name="Southwick A.M."/>
            <person name="Wu H.C."/>
            <person name="Kim C.J."/>
            <person name="Nguyen M."/>
            <person name="Pham P.K."/>
            <person name="Cheuk R.F."/>
            <person name="Karlin-Newmann G."/>
            <person name="Liu S.X."/>
            <person name="Lam B."/>
            <person name="Sakano H."/>
            <person name="Wu T."/>
            <person name="Yu G."/>
            <person name="Miranda M."/>
            <person name="Quach H.L."/>
            <person name="Tripp M."/>
            <person name="Chang C.H."/>
            <person name="Lee J.M."/>
            <person name="Toriumi M.J."/>
            <person name="Chan M.M."/>
            <person name="Tang C.C."/>
            <person name="Onodera C.S."/>
            <person name="Deng J.M."/>
            <person name="Akiyama K."/>
            <person name="Ansari Y."/>
            <person name="Arakawa T."/>
            <person name="Banh J."/>
            <person name="Banno F."/>
            <person name="Bowser L."/>
            <person name="Brooks S.Y."/>
            <person name="Carninci P."/>
            <person name="Chao Q."/>
            <person name="Choy N."/>
            <person name="Enju A."/>
            <person name="Goldsmith A.D."/>
            <person name="Gurjal M."/>
            <person name="Hansen N.F."/>
            <person name="Hayashizaki Y."/>
            <person name="Johnson-Hopson C."/>
            <person name="Hsuan V.W."/>
            <person name="Iida K."/>
            <person name="Karnes M."/>
            <person name="Khan S."/>
            <person name="Koesema E."/>
            <person name="Ishida J."/>
            <person name="Jiang P.X."/>
            <person name="Jones T."/>
            <person name="Kawai J."/>
            <person name="Kamiya A."/>
            <person name="Meyers C."/>
            <person name="Nakajima M."/>
            <person name="Narusaka M."/>
            <person name="Seki M."/>
            <person name="Sakurai T."/>
            <person name="Satou M."/>
            <person name="Tamse R."/>
            <person name="Vaysberg M."/>
            <person name="Wallender E.K."/>
            <person name="Wong C."/>
            <person name="Yamamura Y."/>
            <person name="Yuan S."/>
            <person name="Shinozaki K."/>
            <person name="Davis R.W."/>
            <person name="Theologis A."/>
            <person name="Ecker J.R."/>
        </authorList>
    </citation>
    <scope>NUCLEOTIDE SEQUENCE [LARGE SCALE MRNA] (ISOFORMS 1 AND 2)</scope>
    <source>
        <strain>cv. Columbia</strain>
    </source>
</reference>
<reference key="7">
    <citation type="journal article" date="1995" name="Gene">
        <title>Characterization of two members (ACS1 and ACS3) of the 1-aminocyclopropane-1-carboxylate synthase gene family of Arabidopsis thaliana.</title>
        <authorList>
            <person name="Liang X.-W."/>
            <person name="Oono Y."/>
            <person name="Shen N.F."/>
            <person name="Koehler C."/>
            <person name="Li K."/>
            <person name="Scolnik P.A."/>
            <person name="Theologis A."/>
        </authorList>
    </citation>
    <scope>MUTAGENESIS OF 206-THR--PRO-208</scope>
    <source>
        <strain>cv. Columbia</strain>
    </source>
</reference>
<reference key="8">
    <citation type="journal article" date="2003" name="J. Biol. Chem.">
        <title>Biochemical diversity among the 1-amino-cyclopropane-1-carboxylate synthase isozymes encoded by the Arabidopsis gene family.</title>
        <authorList>
            <person name="Yamagami T."/>
            <person name="Tsuchisaka A."/>
            <person name="Yamada K."/>
            <person name="Haddon W.F."/>
            <person name="Harden L.A."/>
            <person name="Theologis A."/>
        </authorList>
    </citation>
    <scope>ENZYME ACTIVITY</scope>
    <scope>TISSUE SPECIFICITY</scope>
    <scope>INDUCTION</scope>
    <scope>PUTATIVE PROTEOLYTIC PROCESSING</scope>
</reference>
<reference key="9">
    <citation type="journal article" date="2004" name="Plant Cell">
        <title>Phosphorylation of 1-aminocyclopropane-1-carboxylic acid synthase by MPK6, a stress-responsive mitogen-activated protein kinase, induces ethylene biosynthesis in Arabidopsis.</title>
        <authorList>
            <person name="Liu Y."/>
            <person name="Zhang S."/>
        </authorList>
    </citation>
    <scope>PHOSPHORYLATION AT SER-483; SER-488 AND SER-491</scope>
</reference>
<reference key="10">
    <citation type="journal article" date="2014" name="Plant Cell">
        <title>The Arabidopsis 14-3-3 protein RARE COLD INDUCIBLE 1A links low-temperature response and ethylene biosynthesis to regulate freezing tolerance and cold acclimation.</title>
        <authorList>
            <person name="Catala R."/>
            <person name="Lopez-Cobollo R."/>
            <person name="Mar Castellano M."/>
            <person name="Angosto T."/>
            <person name="Alonso J.M."/>
            <person name="Ecker J.R."/>
            <person name="Salinas J."/>
        </authorList>
    </citation>
    <scope>INTERACTION WITH GRF3</scope>
</reference>
<name>1A12_ARATH</name>
<sequence>MGLPGKNKGAVLSKIATNNQHGENSEYFDGWKAYDKDPFHLSRNPHGIIQMGLAENQLCLDLIKDWVKENPEASICTLEGIHQFSDIANFQDYHGLKKFRQAIAHFMGKARGGRVTFDPERVVMSGGATGANETIMFCLADPGDVFLIPSPYYAAFDRDLRWRTGVEIIPVPCSSSDNFKLTVDAAEWAYKKAQESNKKVKGLILTNPSNPLGTMLDKDTLTNLVRFVTRKNIHLVVDEIYAATVFAGGDFVSVAEVVNDVDISEVNVDLIHIVYSLSKDMGLPGFRVGIVYSFNDSVVSCARKMSSFGLVSSQTQLMLASMLSDDQFVDNFLMESSRRLGIRHKVFTTGIKKADIACLTSNAGLFAWMDLRHLLRDRNSFESEIELWHIIIDRVKLNVSPGSSFRCTEPGWFRICFANMDDDTLHVALGRIQDFVSKNKNKIVEKASENDQVIQNKSAKKLKWTQTNLRLSFRRLYEDGLSSPGIMSPHSPLLRA</sequence>